<proteinExistence type="inferred from homology"/>
<geneLocation type="mitochondrion"/>
<name>COX3_RHISA</name>
<accession>O99822</accession>
<sequence>MMFHPFHLVEKSPWPITSSISALSLTLGFVSYFQNLSMYLILLAVLMITISSFQWWRDISREGSFQGFHTHWVLNGLKMGMILFILSEVFFFVSFFWAFFHSSLSPNIEIGSQWPPKGIYPFNPFEIPLLNSTILISSGITVTWSHHAIMNKNYISALNSLLITILLGVAFTMFQGFEYFQAQFKISDGIFGSTFFMTTGFHGLHVLIGSIFLLVSYFRIKNQLISSDHFFGFEASAWYWHFVDVVWLFLFTFMYWW</sequence>
<feature type="chain" id="PRO_0000183845" description="Cytochrome c oxidase subunit 3">
    <location>
        <begin position="1"/>
        <end position="257"/>
    </location>
</feature>
<feature type="transmembrane region" description="Helical" evidence="2">
    <location>
        <begin position="13"/>
        <end position="33"/>
    </location>
</feature>
<feature type="transmembrane region" description="Helical" evidence="2">
    <location>
        <begin position="36"/>
        <end position="56"/>
    </location>
</feature>
<feature type="transmembrane region" description="Helical" evidence="2">
    <location>
        <begin position="80"/>
        <end position="100"/>
    </location>
</feature>
<feature type="transmembrane region" description="Helical" evidence="2">
    <location>
        <begin position="154"/>
        <end position="174"/>
    </location>
</feature>
<feature type="transmembrane region" description="Helical" evidence="2">
    <location>
        <begin position="195"/>
        <end position="215"/>
    </location>
</feature>
<feature type="transmembrane region" description="Helical" evidence="2">
    <location>
        <begin position="237"/>
        <end position="257"/>
    </location>
</feature>
<evidence type="ECO:0000250" key="1">
    <source>
        <dbReference type="UniProtKB" id="P00420"/>
    </source>
</evidence>
<evidence type="ECO:0000255" key="2"/>
<evidence type="ECO:0000305" key="3"/>
<gene>
    <name type="primary">COIII</name>
</gene>
<dbReference type="EC" id="7.1.1.9"/>
<dbReference type="EMBL" id="AF081829">
    <property type="protein sequence ID" value="AAD05522.1"/>
    <property type="molecule type" value="Genomic_DNA"/>
</dbReference>
<dbReference type="PIR" id="T11158">
    <property type="entry name" value="T11158"/>
</dbReference>
<dbReference type="SMR" id="O99822"/>
<dbReference type="KEGG" id="rsan:808371"/>
<dbReference type="CTD" id="4514"/>
<dbReference type="OrthoDB" id="6340938at2759"/>
<dbReference type="GO" id="GO:0005743">
    <property type="term" value="C:mitochondrial inner membrane"/>
    <property type="evidence" value="ECO:0007669"/>
    <property type="project" value="UniProtKB-SubCell"/>
</dbReference>
<dbReference type="GO" id="GO:0004129">
    <property type="term" value="F:cytochrome-c oxidase activity"/>
    <property type="evidence" value="ECO:0007669"/>
    <property type="project" value="UniProtKB-EC"/>
</dbReference>
<dbReference type="GO" id="GO:0006123">
    <property type="term" value="P:mitochondrial electron transport, cytochrome c to oxygen"/>
    <property type="evidence" value="ECO:0007669"/>
    <property type="project" value="TreeGrafter"/>
</dbReference>
<dbReference type="CDD" id="cd01665">
    <property type="entry name" value="Cyt_c_Oxidase_III"/>
    <property type="match status" value="1"/>
</dbReference>
<dbReference type="FunFam" id="1.20.120.80:FF:000002">
    <property type="entry name" value="Cytochrome c oxidase subunit 3"/>
    <property type="match status" value="1"/>
</dbReference>
<dbReference type="Gene3D" id="1.10.287.70">
    <property type="match status" value="1"/>
</dbReference>
<dbReference type="Gene3D" id="1.20.120.80">
    <property type="entry name" value="Cytochrome c oxidase, subunit III, four-helix bundle"/>
    <property type="match status" value="1"/>
</dbReference>
<dbReference type="InterPro" id="IPR024791">
    <property type="entry name" value="Cyt_c/ubiquinol_Oxase_su3"/>
</dbReference>
<dbReference type="InterPro" id="IPR033945">
    <property type="entry name" value="Cyt_c_oxase_su3_dom"/>
</dbReference>
<dbReference type="InterPro" id="IPR000298">
    <property type="entry name" value="Cyt_c_oxidase-like_su3"/>
</dbReference>
<dbReference type="InterPro" id="IPR035973">
    <property type="entry name" value="Cyt_c_oxidase_su3-like_sf"/>
</dbReference>
<dbReference type="InterPro" id="IPR013833">
    <property type="entry name" value="Cyt_c_oxidase_su3_a-hlx"/>
</dbReference>
<dbReference type="PANTHER" id="PTHR11403:SF7">
    <property type="entry name" value="CYTOCHROME C OXIDASE SUBUNIT 3"/>
    <property type="match status" value="1"/>
</dbReference>
<dbReference type="PANTHER" id="PTHR11403">
    <property type="entry name" value="CYTOCHROME C OXIDASE SUBUNIT III"/>
    <property type="match status" value="1"/>
</dbReference>
<dbReference type="Pfam" id="PF00510">
    <property type="entry name" value="COX3"/>
    <property type="match status" value="1"/>
</dbReference>
<dbReference type="SUPFAM" id="SSF81452">
    <property type="entry name" value="Cytochrome c oxidase subunit III-like"/>
    <property type="match status" value="1"/>
</dbReference>
<dbReference type="PROSITE" id="PS50253">
    <property type="entry name" value="COX3"/>
    <property type="match status" value="1"/>
</dbReference>
<comment type="function">
    <text evidence="1">Component of the cytochrome c oxidase, the last enzyme in the mitochondrial electron transport chain which drives oxidative phosphorylation. The respiratory chain contains 3 multisubunit complexes succinate dehydrogenase (complex II, CII), ubiquinol-cytochrome c oxidoreductase (cytochrome b-c1 complex, complex III, CIII) and cytochrome c oxidase (complex IV, CIV), that cooperate to transfer electrons derived from NADH and succinate to molecular oxygen, creating an electrochemical gradient over the inner membrane that drives transmembrane transport and the ATP synthase. Cytochrome c oxidase is the component of the respiratory chain that catalyzes the reduction of oxygen to water. Electrons originating from reduced cytochrome c in the intermembrane space (IMS) are transferred via the dinuclear copper A center (CU(A)) of subunit 2 and heme A of subunit 1 to the active site in subunit 1, a binuclear center (BNC) formed by heme A3 and copper B (CU(B)). The BNC reduces molecular oxygen to 2 water molecules using 4 electrons from cytochrome c in the IMS and 4 protons from the mitochondrial matrix.</text>
</comment>
<comment type="catalytic activity">
    <reaction evidence="1">
        <text>4 Fe(II)-[cytochrome c] + O2 + 8 H(+)(in) = 4 Fe(III)-[cytochrome c] + 2 H2O + 4 H(+)(out)</text>
        <dbReference type="Rhea" id="RHEA:11436"/>
        <dbReference type="Rhea" id="RHEA-COMP:10350"/>
        <dbReference type="Rhea" id="RHEA-COMP:14399"/>
        <dbReference type="ChEBI" id="CHEBI:15377"/>
        <dbReference type="ChEBI" id="CHEBI:15378"/>
        <dbReference type="ChEBI" id="CHEBI:15379"/>
        <dbReference type="ChEBI" id="CHEBI:29033"/>
        <dbReference type="ChEBI" id="CHEBI:29034"/>
        <dbReference type="EC" id="7.1.1.9"/>
    </reaction>
    <physiologicalReaction direction="left-to-right" evidence="1">
        <dbReference type="Rhea" id="RHEA:11437"/>
    </physiologicalReaction>
</comment>
<comment type="subunit">
    <text evidence="1">Component of the cytochrome c oxidase (complex IV, CIV), a multisubunit enzyme composed of a catalytic core of 3 subunits and several supernumerary subunits. The complex exists as a monomer or a dimer and forms supercomplexes (SCs) in the inner mitochondrial membrane with ubiquinol-cytochrome c oxidoreductase (cytochrome b-c1 complex, complex III, CIII).</text>
</comment>
<comment type="subcellular location">
    <subcellularLocation>
        <location evidence="1">Mitochondrion inner membrane</location>
        <topology evidence="1">Multi-pass membrane protein</topology>
    </subcellularLocation>
</comment>
<comment type="similarity">
    <text evidence="3">Belongs to the cytochrome c oxidase subunit 3 family.</text>
</comment>
<protein>
    <recommendedName>
        <fullName>Cytochrome c oxidase subunit 3</fullName>
        <ecNumber>7.1.1.9</ecNumber>
    </recommendedName>
    <alternativeName>
        <fullName>Cytochrome c oxidase polypeptide III</fullName>
    </alternativeName>
</protein>
<organism>
    <name type="scientific">Rhipicephalus sanguineus</name>
    <name type="common">Brown dog tick</name>
    <name type="synonym">Ixodes sanguineus</name>
    <dbReference type="NCBI Taxonomy" id="34632"/>
    <lineage>
        <taxon>Eukaryota</taxon>
        <taxon>Metazoa</taxon>
        <taxon>Ecdysozoa</taxon>
        <taxon>Arthropoda</taxon>
        <taxon>Chelicerata</taxon>
        <taxon>Arachnida</taxon>
        <taxon>Acari</taxon>
        <taxon>Parasitiformes</taxon>
        <taxon>Ixodida</taxon>
        <taxon>Ixodoidea</taxon>
        <taxon>Ixodidae</taxon>
        <taxon>Rhipicephalinae</taxon>
        <taxon>Rhipicephalus</taxon>
        <taxon>Rhipicephalus</taxon>
    </lineage>
</organism>
<keyword id="KW-0472">Membrane</keyword>
<keyword id="KW-0496">Mitochondrion</keyword>
<keyword id="KW-0999">Mitochondrion inner membrane</keyword>
<keyword id="KW-1278">Translocase</keyword>
<keyword id="KW-0812">Transmembrane</keyword>
<keyword id="KW-1133">Transmembrane helix</keyword>
<reference key="1">
    <citation type="journal article" date="1998" name="Mol. Biol. Evol.">
        <title>Mitochondrial gene order is not conserved in arthropods: prostriate and metastriate tick mitochondrial genomes.</title>
        <authorList>
            <person name="Black W.C. IV"/>
            <person name="Roehrdanz R.L."/>
        </authorList>
    </citation>
    <scope>NUCLEOTIDE SEQUENCE [GENOMIC DNA]</scope>
</reference>